<organism>
    <name type="scientific">Saccharomyces cerevisiae (strain ATCC 204508 / S288c)</name>
    <name type="common">Baker's yeast</name>
    <dbReference type="NCBI Taxonomy" id="559292"/>
    <lineage>
        <taxon>Eukaryota</taxon>
        <taxon>Fungi</taxon>
        <taxon>Dikarya</taxon>
        <taxon>Ascomycota</taxon>
        <taxon>Saccharomycotina</taxon>
        <taxon>Saccharomycetes</taxon>
        <taxon>Saccharomycetales</taxon>
        <taxon>Saccharomycetaceae</taxon>
        <taxon>Saccharomyces</taxon>
    </lineage>
</organism>
<feature type="signal peptide" evidence="3">
    <location>
        <begin position="1"/>
        <end position="19"/>
    </location>
</feature>
<feature type="propeptide" id="PRO_0000011899" evidence="7">
    <location>
        <begin position="20"/>
        <end position="30"/>
    </location>
</feature>
<feature type="chain" id="PRO_0000011900" description="Probable family 17 glucosidase SCW4">
    <location>
        <begin position="31"/>
        <end position="386"/>
    </location>
</feature>
<feature type="region of interest" description="Disordered" evidence="4">
    <location>
        <begin position="88"/>
        <end position="127"/>
    </location>
</feature>
<feature type="active site" description="Nucleophile" evidence="2">
    <location>
        <position position="323"/>
    </location>
</feature>
<feature type="glycosylation site" description="N-linked (GlcNAc...) asparagine" evidence="3">
    <location>
        <position position="89"/>
    </location>
</feature>
<feature type="sequence conflict" description="In Ref. 4; AA sequence." evidence="8" ref="4">
    <original>T</original>
    <variation>A</variation>
    <location>
        <position position="35"/>
    </location>
</feature>
<feature type="sequence conflict" description="In Ref. 4; AA sequence." evidence="8" ref="4">
    <original>Q</original>
    <variation>K</variation>
    <location>
        <position position="40"/>
    </location>
</feature>
<sequence length="386" mass="40173">MRLSNLIASASLLSAATLAAPANHEHKDKRAVVTTTVQKQTTIIVNGAASTPVAALEENAVVNSAPAAATSTTSSAASVATAAASSSENNSQVSAAASPASSSAATSTQSSSSSQASSSSSSGEDVSSFASGVRGITYTPYESSGACKSASEVASDLAQLTDFPVIRLYGTDCNQVENVFKAKASNQKVFLGIYYVDQIQDGVNTIKSAVESYGSWDDVTTVSIGNELVNGNQATPSQVGQYIDSGRSALKAAGYTGPVVSVDTFIAVINNPELCDYSDYMAVNAHAYFDKNTVAQDSGKWLLEQIQRVWTACDGKKNVVITESGWPSKGETYGVAVPSKENQKDAVSAITSSCGADTFLFTAFNDYWKADGAYGVEKYWGILSNE</sequence>
<evidence type="ECO:0000250" key="1"/>
<evidence type="ECO:0000250" key="2">
    <source>
        <dbReference type="UniProtKB" id="O22317"/>
    </source>
</evidence>
<evidence type="ECO:0000255" key="3"/>
<evidence type="ECO:0000256" key="4">
    <source>
        <dbReference type="SAM" id="MobiDB-lite"/>
    </source>
</evidence>
<evidence type="ECO:0000269" key="5">
    <source>
    </source>
</evidence>
<evidence type="ECO:0000269" key="6">
    <source>
    </source>
</evidence>
<evidence type="ECO:0000269" key="7">
    <source>
    </source>
</evidence>
<evidence type="ECO:0000305" key="8"/>
<keyword id="KW-0134">Cell wall</keyword>
<keyword id="KW-0961">Cell wall biogenesis/degradation</keyword>
<keyword id="KW-0165">Cleavage on pair of basic residues</keyword>
<keyword id="KW-0903">Direct protein sequencing</keyword>
<keyword id="KW-0325">Glycoprotein</keyword>
<keyword id="KW-0326">Glycosidase</keyword>
<keyword id="KW-0378">Hydrolase</keyword>
<keyword id="KW-1185">Reference proteome</keyword>
<keyword id="KW-0964">Secreted</keyword>
<keyword id="KW-0732">Signal</keyword>
<dbReference type="EC" id="3.2.1.-"/>
<dbReference type="EMBL" id="Z73064">
    <property type="protein sequence ID" value="CAA97310.1"/>
    <property type="molecule type" value="Genomic_DNA"/>
</dbReference>
<dbReference type="EMBL" id="BK006941">
    <property type="protein sequence ID" value="DAA08367.1"/>
    <property type="molecule type" value="Genomic_DNA"/>
</dbReference>
<dbReference type="PIR" id="S64614">
    <property type="entry name" value="S64614"/>
</dbReference>
<dbReference type="RefSeq" id="NP_011795.1">
    <property type="nucleotide sequence ID" value="NM_001181408.1"/>
</dbReference>
<dbReference type="SMR" id="P53334"/>
<dbReference type="BioGRID" id="33529">
    <property type="interactions" value="118"/>
</dbReference>
<dbReference type="DIP" id="DIP-6513N"/>
<dbReference type="FunCoup" id="P53334">
    <property type="interactions" value="168"/>
</dbReference>
<dbReference type="IntAct" id="P53334">
    <property type="interactions" value="6"/>
</dbReference>
<dbReference type="MINT" id="P53334"/>
<dbReference type="STRING" id="4932.YGR279C"/>
<dbReference type="CAZy" id="GH17">
    <property type="family name" value="Glycoside Hydrolase Family 17"/>
</dbReference>
<dbReference type="GlyCosmos" id="P53334">
    <property type="glycosylation" value="1 site, No reported glycans"/>
</dbReference>
<dbReference type="GlyGen" id="P53334">
    <property type="glycosylation" value="2 sites"/>
</dbReference>
<dbReference type="iPTMnet" id="P53334"/>
<dbReference type="PaxDb" id="4932-YGR279C"/>
<dbReference type="PeptideAtlas" id="P53334"/>
<dbReference type="EnsemblFungi" id="YGR279C_mRNA">
    <property type="protein sequence ID" value="YGR279C"/>
    <property type="gene ID" value="YGR279C"/>
</dbReference>
<dbReference type="GeneID" id="853196"/>
<dbReference type="KEGG" id="sce:YGR279C"/>
<dbReference type="AGR" id="SGD:S000003511"/>
<dbReference type="SGD" id="S000003511">
    <property type="gene designation" value="SCW4"/>
</dbReference>
<dbReference type="VEuPathDB" id="FungiDB:YGR279C"/>
<dbReference type="eggNOG" id="ENOG502QTKT">
    <property type="taxonomic scope" value="Eukaryota"/>
</dbReference>
<dbReference type="GeneTree" id="ENSGT00940000176321"/>
<dbReference type="HOGENOM" id="CLU_027285_1_0_1"/>
<dbReference type="InParanoid" id="P53334"/>
<dbReference type="OMA" id="NTFGAEK"/>
<dbReference type="OrthoDB" id="941679at2759"/>
<dbReference type="BioCyc" id="YEAST:YGR279C-MONOMER"/>
<dbReference type="BioGRID-ORCS" id="853196">
    <property type="hits" value="0 hits in 10 CRISPR screens"/>
</dbReference>
<dbReference type="PRO" id="PR:P53334"/>
<dbReference type="Proteomes" id="UP000002311">
    <property type="component" value="Chromosome VII"/>
</dbReference>
<dbReference type="RNAct" id="P53334">
    <property type="molecule type" value="protein"/>
</dbReference>
<dbReference type="GO" id="GO:0009986">
    <property type="term" value="C:cell surface"/>
    <property type="evidence" value="ECO:0000318"/>
    <property type="project" value="GO_Central"/>
</dbReference>
<dbReference type="GO" id="GO:0005576">
    <property type="term" value="C:extracellular region"/>
    <property type="evidence" value="ECO:0000314"/>
    <property type="project" value="SGD"/>
</dbReference>
<dbReference type="GO" id="GO:0009277">
    <property type="term" value="C:fungal-type cell wall"/>
    <property type="evidence" value="ECO:0000314"/>
    <property type="project" value="SGD"/>
</dbReference>
<dbReference type="GO" id="GO:0000324">
    <property type="term" value="C:fungal-type vacuole"/>
    <property type="evidence" value="ECO:0007005"/>
    <property type="project" value="SGD"/>
</dbReference>
<dbReference type="GO" id="GO:0005773">
    <property type="term" value="C:vacuole"/>
    <property type="evidence" value="ECO:0000314"/>
    <property type="project" value="SGD"/>
</dbReference>
<dbReference type="GO" id="GO:0042973">
    <property type="term" value="F:glucan endo-1,3-beta-D-glucosidase activity"/>
    <property type="evidence" value="ECO:0000318"/>
    <property type="project" value="GO_Central"/>
</dbReference>
<dbReference type="GO" id="GO:0015926">
    <property type="term" value="F:glucosidase activity"/>
    <property type="evidence" value="ECO:0000250"/>
    <property type="project" value="SGD"/>
</dbReference>
<dbReference type="GO" id="GO:0003729">
    <property type="term" value="F:mRNA binding"/>
    <property type="evidence" value="ECO:0007005"/>
    <property type="project" value="SGD"/>
</dbReference>
<dbReference type="GO" id="GO:0005975">
    <property type="term" value="P:carbohydrate metabolic process"/>
    <property type="evidence" value="ECO:0007669"/>
    <property type="project" value="InterPro"/>
</dbReference>
<dbReference type="GO" id="GO:0071555">
    <property type="term" value="P:cell wall organization"/>
    <property type="evidence" value="ECO:0000318"/>
    <property type="project" value="GO_Central"/>
</dbReference>
<dbReference type="GO" id="GO:0000747">
    <property type="term" value="P:conjugation with cellular fusion"/>
    <property type="evidence" value="ECO:0000316"/>
    <property type="project" value="SGD"/>
</dbReference>
<dbReference type="FunFam" id="3.20.20.80:FF:000111">
    <property type="entry name" value="Soluble cell wall protein"/>
    <property type="match status" value="1"/>
</dbReference>
<dbReference type="Gene3D" id="3.20.20.80">
    <property type="entry name" value="Glycosidases"/>
    <property type="match status" value="1"/>
</dbReference>
<dbReference type="InterPro" id="IPR050732">
    <property type="entry name" value="Beta-glucan_modifiers"/>
</dbReference>
<dbReference type="InterPro" id="IPR000490">
    <property type="entry name" value="Glyco_hydro_17"/>
</dbReference>
<dbReference type="InterPro" id="IPR017853">
    <property type="entry name" value="Glycoside_hydrolase_SF"/>
</dbReference>
<dbReference type="PANTHER" id="PTHR16631:SF14">
    <property type="entry name" value="FAMILY 17 GLUCOSIDASE SCW10-RELATED"/>
    <property type="match status" value="1"/>
</dbReference>
<dbReference type="PANTHER" id="PTHR16631">
    <property type="entry name" value="GLUCAN 1,3-BETA-GLUCOSIDASE"/>
    <property type="match status" value="1"/>
</dbReference>
<dbReference type="Pfam" id="PF00332">
    <property type="entry name" value="Glyco_hydro_17"/>
    <property type="match status" value="1"/>
</dbReference>
<dbReference type="SUPFAM" id="SSF51445">
    <property type="entry name" value="(Trans)glycosidases"/>
    <property type="match status" value="1"/>
</dbReference>
<dbReference type="PROSITE" id="PS00587">
    <property type="entry name" value="GLYCOSYL_HYDROL_F17"/>
    <property type="match status" value="1"/>
</dbReference>
<comment type="function">
    <text evidence="1">Glucanases possibly play a role in cell expansion during growth, in cell-cell fusion during mating, and in spore release during sporulation.</text>
</comment>
<comment type="subcellular location">
    <subcellularLocation>
        <location evidence="7">Secreted</location>
        <location evidence="7">Cell wall</location>
    </subcellularLocation>
</comment>
<comment type="PTM">
    <text evidence="6">N-glycosylated.</text>
</comment>
<comment type="miscellaneous">
    <text evidence="5">Present with 38000 wall-bound molecules/cell in log phase YPD medium.</text>
</comment>
<comment type="similarity">
    <text evidence="8">Belongs to the glycosyl hydrolase 17 family.</text>
</comment>
<gene>
    <name type="primary">SCW4</name>
    <name type="ordered locus">YGR279C</name>
</gene>
<protein>
    <recommendedName>
        <fullName>Probable family 17 glucosidase SCW4</fullName>
        <ecNumber>3.2.1.-</ecNumber>
    </recommendedName>
    <alternativeName>
        <fullName>Soluble cell wall protein 4</fullName>
    </alternativeName>
</protein>
<proteinExistence type="evidence at protein level"/>
<name>SCW4_YEAST</name>
<reference key="1">
    <citation type="journal article" date="1997" name="Yeast">
        <title>Sequence analysis of a near-subtelomeric 35.4 kb DNA segment on the right arm of chromosome VII from Saccharomyces cerevisiae carrying the MAL1 locus reveals 15 complete open reading frames, including ZUO1, BGL2 and BIO2 genes and an ABC transporter gene.</title>
        <authorList>
            <person name="Volckaert G."/>
            <person name="Voet M."/>
            <person name="Robben J."/>
        </authorList>
    </citation>
    <scope>NUCLEOTIDE SEQUENCE [GENOMIC DNA]</scope>
    <source>
        <strain>ATCC 96604 / S288c / FY1679</strain>
    </source>
</reference>
<reference key="2">
    <citation type="journal article" date="1997" name="Nature">
        <title>The nucleotide sequence of Saccharomyces cerevisiae chromosome VII.</title>
        <authorList>
            <person name="Tettelin H."/>
            <person name="Agostoni-Carbone M.L."/>
            <person name="Albermann K."/>
            <person name="Albers M."/>
            <person name="Arroyo J."/>
            <person name="Backes U."/>
            <person name="Barreiros T."/>
            <person name="Bertani I."/>
            <person name="Bjourson A.J."/>
            <person name="Brueckner M."/>
            <person name="Bruschi C.V."/>
            <person name="Carignani G."/>
            <person name="Castagnoli L."/>
            <person name="Cerdan E."/>
            <person name="Clemente M.L."/>
            <person name="Coblenz A."/>
            <person name="Coglievina M."/>
            <person name="Coissac E."/>
            <person name="Defoor E."/>
            <person name="Del Bino S."/>
            <person name="Delius H."/>
            <person name="Delneri D."/>
            <person name="de Wergifosse P."/>
            <person name="Dujon B."/>
            <person name="Durand P."/>
            <person name="Entian K.-D."/>
            <person name="Eraso P."/>
            <person name="Escribano V."/>
            <person name="Fabiani L."/>
            <person name="Fartmann B."/>
            <person name="Feroli F."/>
            <person name="Feuermann M."/>
            <person name="Frontali L."/>
            <person name="Garcia-Gonzalez M."/>
            <person name="Garcia-Saez M.I."/>
            <person name="Goffeau A."/>
            <person name="Guerreiro P."/>
            <person name="Hani J."/>
            <person name="Hansen M."/>
            <person name="Hebling U."/>
            <person name="Hernandez K."/>
            <person name="Heumann K."/>
            <person name="Hilger F."/>
            <person name="Hofmann B."/>
            <person name="Indge K.J."/>
            <person name="James C.M."/>
            <person name="Klima R."/>
            <person name="Koetter P."/>
            <person name="Kramer B."/>
            <person name="Kramer W."/>
            <person name="Lauquin G."/>
            <person name="Leuther H."/>
            <person name="Louis E.J."/>
            <person name="Maillier E."/>
            <person name="Marconi A."/>
            <person name="Martegani E."/>
            <person name="Mazon M.J."/>
            <person name="Mazzoni C."/>
            <person name="McReynolds A.D.K."/>
            <person name="Melchioretto P."/>
            <person name="Mewes H.-W."/>
            <person name="Minenkova O."/>
            <person name="Mueller-Auer S."/>
            <person name="Nawrocki A."/>
            <person name="Netter P."/>
            <person name="Neu R."/>
            <person name="Nombela C."/>
            <person name="Oliver S.G."/>
            <person name="Panzeri L."/>
            <person name="Paoluzi S."/>
            <person name="Plevani P."/>
            <person name="Portetelle D."/>
            <person name="Portillo F."/>
            <person name="Potier S."/>
            <person name="Purnelle B."/>
            <person name="Rieger M."/>
            <person name="Riles L."/>
            <person name="Rinaldi T."/>
            <person name="Robben J."/>
            <person name="Rodrigues-Pousada C."/>
            <person name="Rodriguez-Belmonte E."/>
            <person name="Rodriguez-Torres A.M."/>
            <person name="Rose M."/>
            <person name="Ruzzi M."/>
            <person name="Saliola M."/>
            <person name="Sanchez-Perez M."/>
            <person name="Schaefer B."/>
            <person name="Schaefer M."/>
            <person name="Scharfe M."/>
            <person name="Schmidheini T."/>
            <person name="Schreer A."/>
            <person name="Skala J."/>
            <person name="Souciet J.-L."/>
            <person name="Steensma H.Y."/>
            <person name="Talla E."/>
            <person name="Thierry A."/>
            <person name="Vandenbol M."/>
            <person name="van der Aart Q.J.M."/>
            <person name="Van Dyck L."/>
            <person name="Vanoni M."/>
            <person name="Verhasselt P."/>
            <person name="Voet M."/>
            <person name="Volckaert G."/>
            <person name="Wambutt R."/>
            <person name="Watson M.D."/>
            <person name="Weber N."/>
            <person name="Wedler E."/>
            <person name="Wedler H."/>
            <person name="Wipfli P."/>
            <person name="Wolf K."/>
            <person name="Wright L.F."/>
            <person name="Zaccaria P."/>
            <person name="Zimmermann M."/>
            <person name="Zollner A."/>
            <person name="Kleine K."/>
        </authorList>
    </citation>
    <scope>NUCLEOTIDE SEQUENCE [LARGE SCALE GENOMIC DNA]</scope>
    <source>
        <strain>ATCC 204508 / S288c</strain>
    </source>
</reference>
<reference key="3">
    <citation type="journal article" date="2014" name="G3 (Bethesda)">
        <title>The reference genome sequence of Saccharomyces cerevisiae: Then and now.</title>
        <authorList>
            <person name="Engel S.R."/>
            <person name="Dietrich F.S."/>
            <person name="Fisk D.G."/>
            <person name="Binkley G."/>
            <person name="Balakrishnan R."/>
            <person name="Costanzo M.C."/>
            <person name="Dwight S.S."/>
            <person name="Hitz B.C."/>
            <person name="Karra K."/>
            <person name="Nash R.S."/>
            <person name="Weng S."/>
            <person name="Wong E.D."/>
            <person name="Lloyd P."/>
            <person name="Skrzypek M.S."/>
            <person name="Miyasato S.R."/>
            <person name="Simison M."/>
            <person name="Cherry J.M."/>
        </authorList>
    </citation>
    <scope>GENOME REANNOTATION</scope>
    <source>
        <strain>ATCC 204508 / S288c</strain>
    </source>
</reference>
<reference key="4">
    <citation type="journal article" date="1998" name="J. Bacteriol.">
        <title>New potential cell wall glucanases of Saccharomyces cerevisiae and their involvement in mating.</title>
        <authorList>
            <person name="Cappellaro C."/>
            <person name="Mrsa V."/>
            <person name="Tanner W."/>
        </authorList>
    </citation>
    <scope>PROTEIN SEQUENCE OF 31-40</scope>
    <scope>SUBCELLULAR LOCATION</scope>
    <source>
        <strain>ATCC 96099 / S288c / SEY6210</strain>
    </source>
</reference>
<reference key="5">
    <citation type="journal article" date="2007" name="FEMS Yeast Res.">
        <title>Mass spectrometric quantitation of covalently bound cell wall proteins in Saccharomyces cerevisiae.</title>
        <authorList>
            <person name="Yin Q.Y."/>
            <person name="de Groot P.W.J."/>
            <person name="de Jong L."/>
            <person name="Klis F.M."/>
            <person name="de Koster C.G."/>
        </authorList>
    </citation>
    <scope>LEVEL OF PROTEIN EXPRESSION</scope>
    <scope>IDENTIFICATION BY MASS SPECTROMETRY</scope>
</reference>
<reference key="6">
    <citation type="journal article" date="2009" name="Mol. Syst. Biol.">
        <title>Global analysis of the glycoproteome in Saccharomyces cerevisiae reveals new roles for protein glycosylation in eukaryotes.</title>
        <authorList>
            <person name="Kung L.A."/>
            <person name="Tao S.-C."/>
            <person name="Qian J."/>
            <person name="Smith M.G."/>
            <person name="Snyder M."/>
            <person name="Zhu H."/>
        </authorList>
    </citation>
    <scope>GLYCOSYLATION [LARGE SCALE ANALYSIS]</scope>
</reference>
<accession>P53334</accession>
<accession>D6VV56</accession>